<name>RT13_MARPO</name>
<protein>
    <recommendedName>
        <fullName evidence="2">Small ribosomal subunit protein uS13m</fullName>
    </recommendedName>
    <alternativeName>
        <fullName>Ribosomal protein S13, mitochondrial</fullName>
    </alternativeName>
</protein>
<dbReference type="EMBL" id="M68929">
    <property type="protein sequence ID" value="AAC09423.1"/>
    <property type="molecule type" value="Genomic_DNA"/>
</dbReference>
<dbReference type="PIR" id="S41141">
    <property type="entry name" value="S41141"/>
</dbReference>
<dbReference type="RefSeq" id="NP_054426.1">
    <property type="nucleotide sequence ID" value="NC_001660.1"/>
</dbReference>
<dbReference type="SMR" id="P26872"/>
<dbReference type="GeneID" id="2702475"/>
<dbReference type="GO" id="GO:0005739">
    <property type="term" value="C:mitochondrion"/>
    <property type="evidence" value="ECO:0007669"/>
    <property type="project" value="UniProtKB-SubCell"/>
</dbReference>
<dbReference type="GO" id="GO:1990904">
    <property type="term" value="C:ribonucleoprotein complex"/>
    <property type="evidence" value="ECO:0007669"/>
    <property type="project" value="UniProtKB-KW"/>
</dbReference>
<dbReference type="GO" id="GO:0005840">
    <property type="term" value="C:ribosome"/>
    <property type="evidence" value="ECO:0007669"/>
    <property type="project" value="UniProtKB-KW"/>
</dbReference>
<dbReference type="GO" id="GO:0019843">
    <property type="term" value="F:rRNA binding"/>
    <property type="evidence" value="ECO:0007669"/>
    <property type="project" value="UniProtKB-KW"/>
</dbReference>
<dbReference type="GO" id="GO:0003735">
    <property type="term" value="F:structural constituent of ribosome"/>
    <property type="evidence" value="ECO:0007669"/>
    <property type="project" value="InterPro"/>
</dbReference>
<dbReference type="GO" id="GO:0006412">
    <property type="term" value="P:translation"/>
    <property type="evidence" value="ECO:0007669"/>
    <property type="project" value="InterPro"/>
</dbReference>
<dbReference type="FunFam" id="1.10.8.50:FF:000001">
    <property type="entry name" value="30S ribosomal protein S13"/>
    <property type="match status" value="1"/>
</dbReference>
<dbReference type="FunFam" id="4.10.910.10:FF:000003">
    <property type="entry name" value="Ribosomal protein S13"/>
    <property type="match status" value="1"/>
</dbReference>
<dbReference type="Gene3D" id="1.10.8.50">
    <property type="match status" value="1"/>
</dbReference>
<dbReference type="Gene3D" id="4.10.910.10">
    <property type="entry name" value="30s ribosomal protein s13, domain 2"/>
    <property type="match status" value="1"/>
</dbReference>
<dbReference type="HAMAP" id="MF_01315">
    <property type="entry name" value="Ribosomal_uS13"/>
    <property type="match status" value="1"/>
</dbReference>
<dbReference type="InterPro" id="IPR027437">
    <property type="entry name" value="Rbsml_uS13_C"/>
</dbReference>
<dbReference type="InterPro" id="IPR001892">
    <property type="entry name" value="Ribosomal_uS13"/>
</dbReference>
<dbReference type="InterPro" id="IPR010979">
    <property type="entry name" value="Ribosomal_uS13-like_H2TH"/>
</dbReference>
<dbReference type="InterPro" id="IPR018269">
    <property type="entry name" value="Ribosomal_uS13_CS"/>
</dbReference>
<dbReference type="PANTHER" id="PTHR10871">
    <property type="entry name" value="30S RIBOSOMAL PROTEIN S13/40S RIBOSOMAL PROTEIN S18"/>
    <property type="match status" value="1"/>
</dbReference>
<dbReference type="PANTHER" id="PTHR10871:SF8">
    <property type="entry name" value="SMALL RIBOSOMAL SUBUNIT PROTEIN US13M"/>
    <property type="match status" value="1"/>
</dbReference>
<dbReference type="Pfam" id="PF00416">
    <property type="entry name" value="Ribosomal_S13"/>
    <property type="match status" value="1"/>
</dbReference>
<dbReference type="PIRSF" id="PIRSF002134">
    <property type="entry name" value="Ribosomal_S13"/>
    <property type="match status" value="1"/>
</dbReference>
<dbReference type="SUPFAM" id="SSF46946">
    <property type="entry name" value="S13-like H2TH domain"/>
    <property type="match status" value="1"/>
</dbReference>
<dbReference type="PROSITE" id="PS00646">
    <property type="entry name" value="RIBOSOMAL_S13_1"/>
    <property type="match status" value="1"/>
</dbReference>
<dbReference type="PROSITE" id="PS50159">
    <property type="entry name" value="RIBOSOMAL_S13_2"/>
    <property type="match status" value="1"/>
</dbReference>
<gene>
    <name type="primary">RPS13</name>
</gene>
<organism>
    <name type="scientific">Marchantia polymorpha</name>
    <name type="common">Common liverwort</name>
    <name type="synonym">Marchantia aquatica</name>
    <dbReference type="NCBI Taxonomy" id="3197"/>
    <lineage>
        <taxon>Eukaryota</taxon>
        <taxon>Viridiplantae</taxon>
        <taxon>Streptophyta</taxon>
        <taxon>Embryophyta</taxon>
        <taxon>Marchantiophyta</taxon>
        <taxon>Marchantiopsida</taxon>
        <taxon>Marchantiidae</taxon>
        <taxon>Marchantiales</taxon>
        <taxon>Marchantiaceae</taxon>
        <taxon>Marchantia</taxon>
    </lineage>
</organism>
<keyword id="KW-0496">Mitochondrion</keyword>
<keyword id="KW-0687">Ribonucleoprotein</keyword>
<keyword id="KW-0689">Ribosomal protein</keyword>
<keyword id="KW-0694">RNA-binding</keyword>
<keyword id="KW-0699">rRNA-binding</keyword>
<comment type="function">
    <text evidence="1">Located at the top of the head of the small subunit, it contacts several helices of the 18S rRNA.</text>
</comment>
<comment type="subunit">
    <text>Part of the small ribosomal subunit.</text>
</comment>
<comment type="subcellular location">
    <subcellularLocation>
        <location>Mitochondrion</location>
    </subcellularLocation>
</comment>
<comment type="similarity">
    <text evidence="2">Belongs to the universal ribosomal protein uS13 family.</text>
</comment>
<geneLocation type="mitochondrion"/>
<sequence>MSYILGTNLNSNKQVKIALTRIFGIGPKKAIQVCDQLGLSDTIKVNKLTKYQFDQILKIISQNYLVDSELKRVIQRDIKRLISIGCYRGFRHNAGLPLRGQRTHTNAKTCRKLRYVSIRS</sequence>
<proteinExistence type="inferred from homology"/>
<evidence type="ECO:0000250" key="1"/>
<evidence type="ECO:0000305" key="2"/>
<accession>P26872</accession>
<feature type="chain" id="PRO_0000132204" description="Small ribosomal subunit protein uS13m">
    <location>
        <begin position="1"/>
        <end position="120"/>
    </location>
</feature>
<reference key="1">
    <citation type="journal article" date="1992" name="J. Mol. Biol.">
        <title>Gene organization deduced from the complete sequence of liverwort Marchantia polymorpha mitochondrial DNA. A primitive form of plant mitochondrial genome.</title>
        <authorList>
            <person name="Oda K."/>
            <person name="Yamato K."/>
            <person name="Ohta E."/>
            <person name="Nakamura Y."/>
            <person name="Takemura M."/>
            <person name="Nozato N."/>
            <person name="Akashi K."/>
            <person name="Kanegae T."/>
            <person name="Ogura Y."/>
            <person name="Kohchi T."/>
            <person name="Ohyama K."/>
        </authorList>
    </citation>
    <scope>NUCLEOTIDE SEQUENCE [GENOMIC DNA]</scope>
</reference>
<reference key="2">
    <citation type="journal article" date="1992" name="Nucleic Acids Res.">
        <title>Gene clusters for ribosomal proteins in the mitochondrial genome of a liverwort, Marchantia polymorpha.</title>
        <authorList>
            <person name="Takemura M."/>
            <person name="Oda K."/>
            <person name="Yamato K."/>
            <person name="Ohta E."/>
            <person name="Nakamura Y."/>
            <person name="Nozato N."/>
            <person name="Akashi K."/>
            <person name="Ohyama K."/>
        </authorList>
    </citation>
    <scope>NUCLEOTIDE SEQUENCE [GENOMIC DNA]</scope>
</reference>